<comment type="function">
    <text evidence="1">Catalyzes the ATP-dependent amidation of deamido-NAD to form NAD. Uses ammonia as a nitrogen source.</text>
</comment>
<comment type="catalytic activity">
    <reaction evidence="1">
        <text>deamido-NAD(+) + NH4(+) + ATP = AMP + diphosphate + NAD(+) + H(+)</text>
        <dbReference type="Rhea" id="RHEA:21188"/>
        <dbReference type="ChEBI" id="CHEBI:15378"/>
        <dbReference type="ChEBI" id="CHEBI:28938"/>
        <dbReference type="ChEBI" id="CHEBI:30616"/>
        <dbReference type="ChEBI" id="CHEBI:33019"/>
        <dbReference type="ChEBI" id="CHEBI:57540"/>
        <dbReference type="ChEBI" id="CHEBI:58437"/>
        <dbReference type="ChEBI" id="CHEBI:456215"/>
        <dbReference type="EC" id="6.3.1.5"/>
    </reaction>
</comment>
<comment type="pathway">
    <text evidence="1">Cofactor biosynthesis; NAD(+) biosynthesis; NAD(+) from deamido-NAD(+) (ammonia route): step 1/1.</text>
</comment>
<comment type="subunit">
    <text evidence="1">Homodimer.</text>
</comment>
<comment type="similarity">
    <text evidence="1">Belongs to the NAD synthetase family.</text>
</comment>
<gene>
    <name evidence="1" type="primary">nadE</name>
    <name type="ordered locus">Bcep18194_B0372</name>
</gene>
<dbReference type="EC" id="6.3.1.5" evidence="1"/>
<dbReference type="EMBL" id="CP000152">
    <property type="protein sequence ID" value="ABB10488.1"/>
    <property type="molecule type" value="Genomic_DNA"/>
</dbReference>
<dbReference type="RefSeq" id="WP_011353986.1">
    <property type="nucleotide sequence ID" value="NC_007511.1"/>
</dbReference>
<dbReference type="SMR" id="Q39AM3"/>
<dbReference type="GeneID" id="45096760"/>
<dbReference type="KEGG" id="bur:Bcep18194_B0372"/>
<dbReference type="PATRIC" id="fig|482957.22.peg.3956"/>
<dbReference type="HOGENOM" id="CLU_059327_3_0_4"/>
<dbReference type="UniPathway" id="UPA00253">
    <property type="reaction ID" value="UER00333"/>
</dbReference>
<dbReference type="Proteomes" id="UP000002705">
    <property type="component" value="Chromosome 2"/>
</dbReference>
<dbReference type="GO" id="GO:0005737">
    <property type="term" value="C:cytoplasm"/>
    <property type="evidence" value="ECO:0007669"/>
    <property type="project" value="InterPro"/>
</dbReference>
<dbReference type="GO" id="GO:0005524">
    <property type="term" value="F:ATP binding"/>
    <property type="evidence" value="ECO:0007669"/>
    <property type="project" value="UniProtKB-UniRule"/>
</dbReference>
<dbReference type="GO" id="GO:0004359">
    <property type="term" value="F:glutaminase activity"/>
    <property type="evidence" value="ECO:0007669"/>
    <property type="project" value="InterPro"/>
</dbReference>
<dbReference type="GO" id="GO:0046872">
    <property type="term" value="F:metal ion binding"/>
    <property type="evidence" value="ECO:0007669"/>
    <property type="project" value="UniProtKB-KW"/>
</dbReference>
<dbReference type="GO" id="GO:0003952">
    <property type="term" value="F:NAD+ synthase (glutamine-hydrolyzing) activity"/>
    <property type="evidence" value="ECO:0007669"/>
    <property type="project" value="InterPro"/>
</dbReference>
<dbReference type="GO" id="GO:0008795">
    <property type="term" value="F:NAD+ synthase activity"/>
    <property type="evidence" value="ECO:0007669"/>
    <property type="project" value="UniProtKB-UniRule"/>
</dbReference>
<dbReference type="GO" id="GO:0009435">
    <property type="term" value="P:NAD biosynthetic process"/>
    <property type="evidence" value="ECO:0007669"/>
    <property type="project" value="UniProtKB-UniRule"/>
</dbReference>
<dbReference type="CDD" id="cd00553">
    <property type="entry name" value="NAD_synthase"/>
    <property type="match status" value="1"/>
</dbReference>
<dbReference type="Gene3D" id="3.40.50.620">
    <property type="entry name" value="HUPs"/>
    <property type="match status" value="1"/>
</dbReference>
<dbReference type="HAMAP" id="MF_00193">
    <property type="entry name" value="NadE_ammonia_dep"/>
    <property type="match status" value="1"/>
</dbReference>
<dbReference type="InterPro" id="IPR022310">
    <property type="entry name" value="NAD/GMP_synthase"/>
</dbReference>
<dbReference type="InterPro" id="IPR003694">
    <property type="entry name" value="NAD_synthase"/>
</dbReference>
<dbReference type="InterPro" id="IPR022926">
    <property type="entry name" value="NH(3)-dep_NAD(+)_synth"/>
</dbReference>
<dbReference type="InterPro" id="IPR014729">
    <property type="entry name" value="Rossmann-like_a/b/a_fold"/>
</dbReference>
<dbReference type="NCBIfam" id="TIGR00552">
    <property type="entry name" value="nadE"/>
    <property type="match status" value="1"/>
</dbReference>
<dbReference type="NCBIfam" id="NF001979">
    <property type="entry name" value="PRK00768.1"/>
    <property type="match status" value="1"/>
</dbReference>
<dbReference type="PANTHER" id="PTHR23090">
    <property type="entry name" value="NH 3 /GLUTAMINE-DEPENDENT NAD + SYNTHETASE"/>
    <property type="match status" value="1"/>
</dbReference>
<dbReference type="PANTHER" id="PTHR23090:SF7">
    <property type="entry name" value="NH(3)-DEPENDENT NAD(+) SYNTHETASE"/>
    <property type="match status" value="1"/>
</dbReference>
<dbReference type="Pfam" id="PF02540">
    <property type="entry name" value="NAD_synthase"/>
    <property type="match status" value="1"/>
</dbReference>
<dbReference type="SUPFAM" id="SSF52402">
    <property type="entry name" value="Adenine nucleotide alpha hydrolases-like"/>
    <property type="match status" value="1"/>
</dbReference>
<keyword id="KW-0067">ATP-binding</keyword>
<keyword id="KW-0436">Ligase</keyword>
<keyword id="KW-0460">Magnesium</keyword>
<keyword id="KW-0479">Metal-binding</keyword>
<keyword id="KW-0520">NAD</keyword>
<keyword id="KW-0547">Nucleotide-binding</keyword>
<evidence type="ECO:0000255" key="1">
    <source>
        <dbReference type="HAMAP-Rule" id="MF_00193"/>
    </source>
</evidence>
<sequence length="282" mass="30798">MTSADYASRQRAIIAELNVASEFDAEAEIARRVEFLAQYLRSTGLRTYVLGISGGVDSSTAGRLAQLSVEKLRADGYDARFVAMRLPNGVQNDEADAQRALAFVRADEELTVNVKPAADAMLGALAASGHAFETPAQQDFVHGNIKARERMIAQYAVAGARRGIVIGTDHAAESLMGFFTKFGDGGADILPLAGLNKRRVRAVARALGGEELIVMKVPTADLEELRPLRPDEHAYGVSYDEIDDFLEGKPVADNVYETVLRFYDASRHKRALPYTMFDWPTA</sequence>
<feature type="chain" id="PRO_1000099014" description="NH(3)-dependent NAD(+) synthetase">
    <location>
        <begin position="1"/>
        <end position="282"/>
    </location>
</feature>
<feature type="binding site" evidence="1">
    <location>
        <begin position="51"/>
        <end position="58"/>
    </location>
    <ligand>
        <name>ATP</name>
        <dbReference type="ChEBI" id="CHEBI:30616"/>
    </ligand>
</feature>
<feature type="binding site" evidence="1">
    <location>
        <position position="57"/>
    </location>
    <ligand>
        <name>Mg(2+)</name>
        <dbReference type="ChEBI" id="CHEBI:18420"/>
    </ligand>
</feature>
<feature type="binding site" evidence="1">
    <location>
        <position position="148"/>
    </location>
    <ligand>
        <name>deamido-NAD(+)</name>
        <dbReference type="ChEBI" id="CHEBI:58437"/>
    </ligand>
</feature>
<feature type="binding site" evidence="1">
    <location>
        <position position="168"/>
    </location>
    <ligand>
        <name>ATP</name>
        <dbReference type="ChEBI" id="CHEBI:30616"/>
    </ligand>
</feature>
<feature type="binding site" evidence="1">
    <location>
        <position position="173"/>
    </location>
    <ligand>
        <name>Mg(2+)</name>
        <dbReference type="ChEBI" id="CHEBI:18420"/>
    </ligand>
</feature>
<feature type="binding site" evidence="1">
    <location>
        <position position="181"/>
    </location>
    <ligand>
        <name>deamido-NAD(+)</name>
        <dbReference type="ChEBI" id="CHEBI:58437"/>
    </ligand>
</feature>
<feature type="binding site" evidence="1">
    <location>
        <position position="188"/>
    </location>
    <ligand>
        <name>deamido-NAD(+)</name>
        <dbReference type="ChEBI" id="CHEBI:58437"/>
    </ligand>
</feature>
<feature type="binding site" evidence="1">
    <location>
        <position position="197"/>
    </location>
    <ligand>
        <name>ATP</name>
        <dbReference type="ChEBI" id="CHEBI:30616"/>
    </ligand>
</feature>
<feature type="binding site" evidence="1">
    <location>
        <position position="219"/>
    </location>
    <ligand>
        <name>ATP</name>
        <dbReference type="ChEBI" id="CHEBI:30616"/>
    </ligand>
</feature>
<feature type="binding site" evidence="1">
    <location>
        <begin position="268"/>
        <end position="269"/>
    </location>
    <ligand>
        <name>deamido-NAD(+)</name>
        <dbReference type="ChEBI" id="CHEBI:58437"/>
    </ligand>
</feature>
<reference key="1">
    <citation type="submission" date="2005-10" db="EMBL/GenBank/DDBJ databases">
        <title>Complete sequence of chromosome 2 of Burkholderia sp. 383.</title>
        <authorList>
            <consortium name="US DOE Joint Genome Institute"/>
            <person name="Copeland A."/>
            <person name="Lucas S."/>
            <person name="Lapidus A."/>
            <person name="Barry K."/>
            <person name="Detter J.C."/>
            <person name="Glavina T."/>
            <person name="Hammon N."/>
            <person name="Israni S."/>
            <person name="Pitluck S."/>
            <person name="Chain P."/>
            <person name="Malfatti S."/>
            <person name="Shin M."/>
            <person name="Vergez L."/>
            <person name="Schmutz J."/>
            <person name="Larimer F."/>
            <person name="Land M."/>
            <person name="Kyrpides N."/>
            <person name="Lykidis A."/>
            <person name="Richardson P."/>
        </authorList>
    </citation>
    <scope>NUCLEOTIDE SEQUENCE [LARGE SCALE GENOMIC DNA]</scope>
    <source>
        <strain>ATCC 17760 / DSM 23089 / LMG 22485 / NCIMB 9086 / R18194 / 383</strain>
    </source>
</reference>
<name>NADE_BURL3</name>
<protein>
    <recommendedName>
        <fullName evidence="1">NH(3)-dependent NAD(+) synthetase</fullName>
        <ecNumber evidence="1">6.3.1.5</ecNumber>
    </recommendedName>
</protein>
<accession>Q39AM3</accession>
<proteinExistence type="inferred from homology"/>
<organism>
    <name type="scientific">Burkholderia lata (strain ATCC 17760 / DSM 23089 / LMG 22485 / NCIMB 9086 / R18194 / 383)</name>
    <dbReference type="NCBI Taxonomy" id="482957"/>
    <lineage>
        <taxon>Bacteria</taxon>
        <taxon>Pseudomonadati</taxon>
        <taxon>Pseudomonadota</taxon>
        <taxon>Betaproteobacteria</taxon>
        <taxon>Burkholderiales</taxon>
        <taxon>Burkholderiaceae</taxon>
        <taxon>Burkholderia</taxon>
        <taxon>Burkholderia cepacia complex</taxon>
    </lineage>
</organism>